<keyword id="KW-0067">ATP-binding</keyword>
<keyword id="KW-0133">Cell shape</keyword>
<keyword id="KW-0961">Cell wall biogenesis/degradation</keyword>
<keyword id="KW-0963">Cytoplasm</keyword>
<keyword id="KW-0436">Ligase</keyword>
<keyword id="KW-0460">Magnesium</keyword>
<keyword id="KW-0464">Manganese</keyword>
<keyword id="KW-0479">Metal-binding</keyword>
<keyword id="KW-0547">Nucleotide-binding</keyword>
<keyword id="KW-0573">Peptidoglycan synthesis</keyword>
<keyword id="KW-1185">Reference proteome</keyword>
<gene>
    <name evidence="2" type="primary">ddl</name>
    <name type="ordered locus">Nther_0011</name>
</gene>
<comment type="function">
    <text evidence="2">Cell wall formation.</text>
</comment>
<comment type="catalytic activity">
    <reaction evidence="2">
        <text>2 D-alanine + ATP = D-alanyl-D-alanine + ADP + phosphate + H(+)</text>
        <dbReference type="Rhea" id="RHEA:11224"/>
        <dbReference type="ChEBI" id="CHEBI:15378"/>
        <dbReference type="ChEBI" id="CHEBI:30616"/>
        <dbReference type="ChEBI" id="CHEBI:43474"/>
        <dbReference type="ChEBI" id="CHEBI:57416"/>
        <dbReference type="ChEBI" id="CHEBI:57822"/>
        <dbReference type="ChEBI" id="CHEBI:456216"/>
        <dbReference type="EC" id="6.3.2.4"/>
    </reaction>
</comment>
<comment type="cofactor">
    <cofactor evidence="1">
        <name>Mg(2+)</name>
        <dbReference type="ChEBI" id="CHEBI:18420"/>
    </cofactor>
    <cofactor evidence="1">
        <name>Mn(2+)</name>
        <dbReference type="ChEBI" id="CHEBI:29035"/>
    </cofactor>
    <text evidence="1">Binds 2 magnesium or manganese ions per subunit.</text>
</comment>
<comment type="pathway">
    <text evidence="2">Cell wall biogenesis; peptidoglycan biosynthesis.</text>
</comment>
<comment type="subcellular location">
    <subcellularLocation>
        <location evidence="2">Cytoplasm</location>
    </subcellularLocation>
</comment>
<comment type="similarity">
    <text evidence="2">Belongs to the D-alanine--D-alanine ligase family.</text>
</comment>
<dbReference type="EC" id="6.3.2.4" evidence="2"/>
<dbReference type="EMBL" id="CP001034">
    <property type="protein sequence ID" value="ACB83610.1"/>
    <property type="molecule type" value="Genomic_DNA"/>
</dbReference>
<dbReference type="RefSeq" id="WP_012446501.1">
    <property type="nucleotide sequence ID" value="NC_010718.1"/>
</dbReference>
<dbReference type="SMR" id="B2A2Z6"/>
<dbReference type="FunCoup" id="B2A2Z6">
    <property type="interactions" value="295"/>
</dbReference>
<dbReference type="STRING" id="457570.Nther_0011"/>
<dbReference type="KEGG" id="nth:Nther_0011"/>
<dbReference type="eggNOG" id="COG1181">
    <property type="taxonomic scope" value="Bacteria"/>
</dbReference>
<dbReference type="HOGENOM" id="CLU_039268_0_0_9"/>
<dbReference type="InParanoid" id="B2A2Z6"/>
<dbReference type="OrthoDB" id="9813261at2"/>
<dbReference type="UniPathway" id="UPA00219"/>
<dbReference type="Proteomes" id="UP000001683">
    <property type="component" value="Chromosome"/>
</dbReference>
<dbReference type="GO" id="GO:0005829">
    <property type="term" value="C:cytosol"/>
    <property type="evidence" value="ECO:0007669"/>
    <property type="project" value="TreeGrafter"/>
</dbReference>
<dbReference type="GO" id="GO:0005524">
    <property type="term" value="F:ATP binding"/>
    <property type="evidence" value="ECO:0007669"/>
    <property type="project" value="UniProtKB-KW"/>
</dbReference>
<dbReference type="GO" id="GO:0008716">
    <property type="term" value="F:D-alanine-D-alanine ligase activity"/>
    <property type="evidence" value="ECO:0007669"/>
    <property type="project" value="UniProtKB-UniRule"/>
</dbReference>
<dbReference type="GO" id="GO:0046872">
    <property type="term" value="F:metal ion binding"/>
    <property type="evidence" value="ECO:0007669"/>
    <property type="project" value="UniProtKB-KW"/>
</dbReference>
<dbReference type="GO" id="GO:0071555">
    <property type="term" value="P:cell wall organization"/>
    <property type="evidence" value="ECO:0007669"/>
    <property type="project" value="UniProtKB-KW"/>
</dbReference>
<dbReference type="GO" id="GO:0009252">
    <property type="term" value="P:peptidoglycan biosynthetic process"/>
    <property type="evidence" value="ECO:0007669"/>
    <property type="project" value="UniProtKB-UniRule"/>
</dbReference>
<dbReference type="GO" id="GO:0008360">
    <property type="term" value="P:regulation of cell shape"/>
    <property type="evidence" value="ECO:0007669"/>
    <property type="project" value="UniProtKB-KW"/>
</dbReference>
<dbReference type="FunFam" id="3.30.1490.20:FF:000007">
    <property type="entry name" value="D-alanine--D-alanine ligase"/>
    <property type="match status" value="1"/>
</dbReference>
<dbReference type="FunFam" id="3.30.470.20:FF:000008">
    <property type="entry name" value="D-alanine--D-alanine ligase"/>
    <property type="match status" value="1"/>
</dbReference>
<dbReference type="Gene3D" id="3.40.50.20">
    <property type="match status" value="1"/>
</dbReference>
<dbReference type="Gene3D" id="3.30.1490.20">
    <property type="entry name" value="ATP-grasp fold, A domain"/>
    <property type="match status" value="1"/>
</dbReference>
<dbReference type="Gene3D" id="3.30.470.20">
    <property type="entry name" value="ATP-grasp fold, B domain"/>
    <property type="match status" value="1"/>
</dbReference>
<dbReference type="HAMAP" id="MF_00047">
    <property type="entry name" value="Dala_Dala_lig"/>
    <property type="match status" value="1"/>
</dbReference>
<dbReference type="InterPro" id="IPR011761">
    <property type="entry name" value="ATP-grasp"/>
</dbReference>
<dbReference type="InterPro" id="IPR013815">
    <property type="entry name" value="ATP_grasp_subdomain_1"/>
</dbReference>
<dbReference type="InterPro" id="IPR000291">
    <property type="entry name" value="D-Ala_lig_Van_CS"/>
</dbReference>
<dbReference type="InterPro" id="IPR005905">
    <property type="entry name" value="D_ala_D_ala"/>
</dbReference>
<dbReference type="InterPro" id="IPR011095">
    <property type="entry name" value="Dala_Dala_lig_C"/>
</dbReference>
<dbReference type="InterPro" id="IPR011127">
    <property type="entry name" value="Dala_Dala_lig_N"/>
</dbReference>
<dbReference type="InterPro" id="IPR016185">
    <property type="entry name" value="PreATP-grasp_dom_sf"/>
</dbReference>
<dbReference type="NCBIfam" id="TIGR01205">
    <property type="entry name" value="D_ala_D_alaTIGR"/>
    <property type="match status" value="1"/>
</dbReference>
<dbReference type="NCBIfam" id="NF002378">
    <property type="entry name" value="PRK01372.1"/>
    <property type="match status" value="1"/>
</dbReference>
<dbReference type="NCBIfam" id="NF002528">
    <property type="entry name" value="PRK01966.1-4"/>
    <property type="match status" value="1"/>
</dbReference>
<dbReference type="PANTHER" id="PTHR23132">
    <property type="entry name" value="D-ALANINE--D-ALANINE LIGASE"/>
    <property type="match status" value="1"/>
</dbReference>
<dbReference type="PANTHER" id="PTHR23132:SF25">
    <property type="entry name" value="D-ALANINE--D-ALANINE LIGASE A"/>
    <property type="match status" value="1"/>
</dbReference>
<dbReference type="Pfam" id="PF07478">
    <property type="entry name" value="Dala_Dala_lig_C"/>
    <property type="match status" value="1"/>
</dbReference>
<dbReference type="Pfam" id="PF01820">
    <property type="entry name" value="Dala_Dala_lig_N"/>
    <property type="match status" value="1"/>
</dbReference>
<dbReference type="PIRSF" id="PIRSF039102">
    <property type="entry name" value="Ddl/VanB"/>
    <property type="match status" value="1"/>
</dbReference>
<dbReference type="SUPFAM" id="SSF56059">
    <property type="entry name" value="Glutathione synthetase ATP-binding domain-like"/>
    <property type="match status" value="1"/>
</dbReference>
<dbReference type="SUPFAM" id="SSF52440">
    <property type="entry name" value="PreATP-grasp domain"/>
    <property type="match status" value="1"/>
</dbReference>
<dbReference type="PROSITE" id="PS50975">
    <property type="entry name" value="ATP_GRASP"/>
    <property type="match status" value="1"/>
</dbReference>
<dbReference type="PROSITE" id="PS00843">
    <property type="entry name" value="DALA_DALA_LIGASE_1"/>
    <property type="match status" value="1"/>
</dbReference>
<dbReference type="PROSITE" id="PS00844">
    <property type="entry name" value="DALA_DALA_LIGASE_2"/>
    <property type="match status" value="1"/>
</dbReference>
<organism>
    <name type="scientific">Natranaerobius thermophilus (strain ATCC BAA-1301 / DSM 18059 / JW/NM-WN-LF)</name>
    <dbReference type="NCBI Taxonomy" id="457570"/>
    <lineage>
        <taxon>Bacteria</taxon>
        <taxon>Bacillati</taxon>
        <taxon>Bacillota</taxon>
        <taxon>Clostridia</taxon>
        <taxon>Natranaerobiales</taxon>
        <taxon>Natranaerobiaceae</taxon>
        <taxon>Natranaerobius</taxon>
    </lineage>
</organism>
<sequence>MKKLRVGVLFGGRSGEHEVSLKSANSILNALDRELFEVIPIGIRKNGEWISGEAPLEELETGIKNQGNYAVSILPDPSKKVLWKLDPFEKISEIDLIFPVLHGTFGEDGTVQGFLDLCGIPYVGSGVLGSSLAMDKVMMKKILRRHGLQVANYYSFKRSEWEQDRDEIIFSIEKQLSYPIFVKPANLGSSVGISKVKNREELIQGIDLAVKYDMKCLAEEFIPGKEIELSILGNDNPKTSVPGEIIPANEFYDYNAKYINNKSKLVIPAPLSETLKTKIEDMGVEAFRVLDCYGLSRVDYFVLEDQEEVYINEINTMPGFTEISMYPKLWTESGLSYSQLLTDLIYLALARQQEKDRNSTDFSES</sequence>
<reference key="1">
    <citation type="submission" date="2008-04" db="EMBL/GenBank/DDBJ databases">
        <title>Complete sequence of chromosome of Natranaerobius thermophilus JW/NM-WN-LF.</title>
        <authorList>
            <consortium name="US DOE Joint Genome Institute"/>
            <person name="Copeland A."/>
            <person name="Lucas S."/>
            <person name="Lapidus A."/>
            <person name="Glavina del Rio T."/>
            <person name="Dalin E."/>
            <person name="Tice H."/>
            <person name="Bruce D."/>
            <person name="Goodwin L."/>
            <person name="Pitluck S."/>
            <person name="Chertkov O."/>
            <person name="Brettin T."/>
            <person name="Detter J.C."/>
            <person name="Han C."/>
            <person name="Kuske C.R."/>
            <person name="Schmutz J."/>
            <person name="Larimer F."/>
            <person name="Land M."/>
            <person name="Hauser L."/>
            <person name="Kyrpides N."/>
            <person name="Lykidis A."/>
            <person name="Mesbah N.M."/>
            <person name="Wiegel J."/>
        </authorList>
    </citation>
    <scope>NUCLEOTIDE SEQUENCE [LARGE SCALE GENOMIC DNA]</scope>
    <source>
        <strain>ATCC BAA-1301 / DSM 18059 / JW/NM-WN-LF</strain>
    </source>
</reference>
<protein>
    <recommendedName>
        <fullName evidence="2">D-alanine--D-alanine ligase</fullName>
        <ecNumber evidence="2">6.3.2.4</ecNumber>
    </recommendedName>
    <alternativeName>
        <fullName evidence="2">D-Ala-D-Ala ligase</fullName>
    </alternativeName>
    <alternativeName>
        <fullName evidence="2">D-alanylalanine synthetase</fullName>
    </alternativeName>
</protein>
<accession>B2A2Z6</accession>
<evidence type="ECO:0000250" key="1"/>
<evidence type="ECO:0000255" key="2">
    <source>
        <dbReference type="HAMAP-Rule" id="MF_00047"/>
    </source>
</evidence>
<name>DDL_NATTJ</name>
<feature type="chain" id="PRO_1000091196" description="D-alanine--D-alanine ligase">
    <location>
        <begin position="1"/>
        <end position="365"/>
    </location>
</feature>
<feature type="domain" description="ATP-grasp" evidence="2">
    <location>
        <begin position="140"/>
        <end position="346"/>
    </location>
</feature>
<feature type="binding site" evidence="2">
    <location>
        <begin position="173"/>
        <end position="228"/>
    </location>
    <ligand>
        <name>ATP</name>
        <dbReference type="ChEBI" id="CHEBI:30616"/>
    </ligand>
</feature>
<feature type="binding site" evidence="2">
    <location>
        <position position="299"/>
    </location>
    <ligand>
        <name>Mg(2+)</name>
        <dbReference type="ChEBI" id="CHEBI:18420"/>
        <label>1</label>
    </ligand>
</feature>
<feature type="binding site" evidence="2">
    <location>
        <position position="313"/>
    </location>
    <ligand>
        <name>Mg(2+)</name>
        <dbReference type="ChEBI" id="CHEBI:18420"/>
        <label>1</label>
    </ligand>
</feature>
<feature type="binding site" evidence="2">
    <location>
        <position position="313"/>
    </location>
    <ligand>
        <name>Mg(2+)</name>
        <dbReference type="ChEBI" id="CHEBI:18420"/>
        <label>2</label>
    </ligand>
</feature>
<feature type="binding site" evidence="2">
    <location>
        <position position="315"/>
    </location>
    <ligand>
        <name>Mg(2+)</name>
        <dbReference type="ChEBI" id="CHEBI:18420"/>
        <label>2</label>
    </ligand>
</feature>
<proteinExistence type="inferred from homology"/>